<gene>
    <name evidence="1" type="primary">pth</name>
    <name type="ordered locus">M6_Spy0005</name>
</gene>
<sequence length="189" mass="21169">MVKMIVGLGNPGSKYEKTKHNIGFMAIDNIVKNLDVTFTDDKNFKAQIGSTFINHEKVYFVKPTTFMNNSGIAVKALLTYYNIDITDLIVIYDDLDMEVSKLRLRSKGSAGGHNGIKSIIAHIGTQEFNRIKVGIGRPLKGMTVISHVMGQFNTEDNIAISLTLDRVVNAVKFYLQENDFEKTMQKFNG</sequence>
<protein>
    <recommendedName>
        <fullName evidence="1">Peptidyl-tRNA hydrolase</fullName>
        <shortName evidence="1">Pth</shortName>
        <ecNumber evidence="1">3.1.1.29</ecNumber>
    </recommendedName>
</protein>
<name>PTH_STRP6</name>
<keyword id="KW-0963">Cytoplasm</keyword>
<keyword id="KW-0378">Hydrolase</keyword>
<keyword id="KW-0694">RNA-binding</keyword>
<keyword id="KW-0820">tRNA-binding</keyword>
<comment type="function">
    <text evidence="1">Hydrolyzes ribosome-free peptidyl-tRNAs (with 1 or more amino acids incorporated), which drop off the ribosome during protein synthesis, or as a result of ribosome stalling.</text>
</comment>
<comment type="function">
    <text evidence="1">Catalyzes the release of premature peptidyl moieties from peptidyl-tRNA molecules trapped in stalled 50S ribosomal subunits, and thus maintains levels of free tRNAs and 50S ribosomes.</text>
</comment>
<comment type="catalytic activity">
    <reaction evidence="1">
        <text>an N-acyl-L-alpha-aminoacyl-tRNA + H2O = an N-acyl-L-amino acid + a tRNA + H(+)</text>
        <dbReference type="Rhea" id="RHEA:54448"/>
        <dbReference type="Rhea" id="RHEA-COMP:10123"/>
        <dbReference type="Rhea" id="RHEA-COMP:13883"/>
        <dbReference type="ChEBI" id="CHEBI:15377"/>
        <dbReference type="ChEBI" id="CHEBI:15378"/>
        <dbReference type="ChEBI" id="CHEBI:59874"/>
        <dbReference type="ChEBI" id="CHEBI:78442"/>
        <dbReference type="ChEBI" id="CHEBI:138191"/>
        <dbReference type="EC" id="3.1.1.29"/>
    </reaction>
</comment>
<comment type="subunit">
    <text evidence="1">Monomer.</text>
</comment>
<comment type="subcellular location">
    <subcellularLocation>
        <location evidence="1">Cytoplasm</location>
    </subcellularLocation>
</comment>
<comment type="similarity">
    <text evidence="1">Belongs to the PTH family.</text>
</comment>
<comment type="sequence caution" evidence="2">
    <conflict type="erroneous initiation">
        <sequence resource="EMBL-CDS" id="AAT86140"/>
    </conflict>
    <text>Extended N-terminus.</text>
</comment>
<reference key="1">
    <citation type="journal article" date="2004" name="J. Infect. Dis.">
        <title>Progress toward characterization of the group A Streptococcus metagenome: complete genome sequence of a macrolide-resistant serotype M6 strain.</title>
        <authorList>
            <person name="Banks D.J."/>
            <person name="Porcella S.F."/>
            <person name="Barbian K.D."/>
            <person name="Beres S.B."/>
            <person name="Philips L.E."/>
            <person name="Voyich J.M."/>
            <person name="DeLeo F.R."/>
            <person name="Martin J.M."/>
            <person name="Somerville G.A."/>
            <person name="Musser J.M."/>
        </authorList>
    </citation>
    <scope>NUCLEOTIDE SEQUENCE [LARGE SCALE GENOMIC DNA]</scope>
    <source>
        <strain>ATCC BAA-946 / MGAS10394</strain>
    </source>
</reference>
<proteinExistence type="inferred from homology"/>
<organism>
    <name type="scientific">Streptococcus pyogenes serotype M6 (strain ATCC BAA-946 / MGAS10394)</name>
    <dbReference type="NCBI Taxonomy" id="286636"/>
    <lineage>
        <taxon>Bacteria</taxon>
        <taxon>Bacillati</taxon>
        <taxon>Bacillota</taxon>
        <taxon>Bacilli</taxon>
        <taxon>Lactobacillales</taxon>
        <taxon>Streptococcaceae</taxon>
        <taxon>Streptococcus</taxon>
    </lineage>
</organism>
<evidence type="ECO:0000255" key="1">
    <source>
        <dbReference type="HAMAP-Rule" id="MF_00083"/>
    </source>
</evidence>
<evidence type="ECO:0000305" key="2"/>
<feature type="chain" id="PRO_0000187832" description="Peptidyl-tRNA hydrolase">
    <location>
        <begin position="1"/>
        <end position="189"/>
    </location>
</feature>
<feature type="active site" description="Proton acceptor" evidence="1">
    <location>
        <position position="20"/>
    </location>
</feature>
<feature type="binding site" evidence="1">
    <location>
        <position position="15"/>
    </location>
    <ligand>
        <name>tRNA</name>
        <dbReference type="ChEBI" id="CHEBI:17843"/>
    </ligand>
</feature>
<feature type="binding site" evidence="1">
    <location>
        <position position="66"/>
    </location>
    <ligand>
        <name>tRNA</name>
        <dbReference type="ChEBI" id="CHEBI:17843"/>
    </ligand>
</feature>
<feature type="binding site" evidence="1">
    <location>
        <position position="68"/>
    </location>
    <ligand>
        <name>tRNA</name>
        <dbReference type="ChEBI" id="CHEBI:17843"/>
    </ligand>
</feature>
<feature type="binding site" evidence="1">
    <location>
        <position position="114"/>
    </location>
    <ligand>
        <name>tRNA</name>
        <dbReference type="ChEBI" id="CHEBI:17843"/>
    </ligand>
</feature>
<feature type="site" description="Discriminates between blocked and unblocked aminoacyl-tRNA" evidence="1">
    <location>
        <position position="10"/>
    </location>
</feature>
<feature type="site" description="Stabilizes the basic form of H active site to accept a proton" evidence="1">
    <location>
        <position position="93"/>
    </location>
</feature>
<accession>Q5XEM3</accession>
<dbReference type="EC" id="3.1.1.29" evidence="1"/>
<dbReference type="EMBL" id="CP000003">
    <property type="protein sequence ID" value="AAT86140.1"/>
    <property type="status" value="ALT_INIT"/>
    <property type="molecule type" value="Genomic_DNA"/>
</dbReference>
<dbReference type="RefSeq" id="WP_011017221.1">
    <property type="nucleotide sequence ID" value="NC_006086.1"/>
</dbReference>
<dbReference type="SMR" id="Q5XEM3"/>
<dbReference type="KEGG" id="spa:M6_Spy0005"/>
<dbReference type="HOGENOM" id="CLU_062456_4_1_9"/>
<dbReference type="Proteomes" id="UP000001167">
    <property type="component" value="Chromosome"/>
</dbReference>
<dbReference type="GO" id="GO:0005737">
    <property type="term" value="C:cytoplasm"/>
    <property type="evidence" value="ECO:0007669"/>
    <property type="project" value="UniProtKB-SubCell"/>
</dbReference>
<dbReference type="GO" id="GO:0004045">
    <property type="term" value="F:peptidyl-tRNA hydrolase activity"/>
    <property type="evidence" value="ECO:0007669"/>
    <property type="project" value="UniProtKB-UniRule"/>
</dbReference>
<dbReference type="GO" id="GO:0000049">
    <property type="term" value="F:tRNA binding"/>
    <property type="evidence" value="ECO:0007669"/>
    <property type="project" value="UniProtKB-UniRule"/>
</dbReference>
<dbReference type="GO" id="GO:0006515">
    <property type="term" value="P:protein quality control for misfolded or incompletely synthesized proteins"/>
    <property type="evidence" value="ECO:0007669"/>
    <property type="project" value="UniProtKB-UniRule"/>
</dbReference>
<dbReference type="GO" id="GO:0072344">
    <property type="term" value="P:rescue of stalled ribosome"/>
    <property type="evidence" value="ECO:0007669"/>
    <property type="project" value="UniProtKB-UniRule"/>
</dbReference>
<dbReference type="CDD" id="cd00462">
    <property type="entry name" value="PTH"/>
    <property type="match status" value="1"/>
</dbReference>
<dbReference type="FunFam" id="3.40.50.1470:FF:000001">
    <property type="entry name" value="Peptidyl-tRNA hydrolase"/>
    <property type="match status" value="1"/>
</dbReference>
<dbReference type="Gene3D" id="3.40.50.1470">
    <property type="entry name" value="Peptidyl-tRNA hydrolase"/>
    <property type="match status" value="1"/>
</dbReference>
<dbReference type="HAMAP" id="MF_00083">
    <property type="entry name" value="Pept_tRNA_hydro_bact"/>
    <property type="match status" value="1"/>
</dbReference>
<dbReference type="InterPro" id="IPR001328">
    <property type="entry name" value="Pept_tRNA_hydro"/>
</dbReference>
<dbReference type="InterPro" id="IPR018171">
    <property type="entry name" value="Pept_tRNA_hydro_CS"/>
</dbReference>
<dbReference type="InterPro" id="IPR036416">
    <property type="entry name" value="Pept_tRNA_hydro_sf"/>
</dbReference>
<dbReference type="NCBIfam" id="TIGR00447">
    <property type="entry name" value="pth"/>
    <property type="match status" value="1"/>
</dbReference>
<dbReference type="PANTHER" id="PTHR17224">
    <property type="entry name" value="PEPTIDYL-TRNA HYDROLASE"/>
    <property type="match status" value="1"/>
</dbReference>
<dbReference type="PANTHER" id="PTHR17224:SF1">
    <property type="entry name" value="PEPTIDYL-TRNA HYDROLASE"/>
    <property type="match status" value="1"/>
</dbReference>
<dbReference type="Pfam" id="PF01195">
    <property type="entry name" value="Pept_tRNA_hydro"/>
    <property type="match status" value="1"/>
</dbReference>
<dbReference type="SUPFAM" id="SSF53178">
    <property type="entry name" value="Peptidyl-tRNA hydrolase-like"/>
    <property type="match status" value="1"/>
</dbReference>
<dbReference type="PROSITE" id="PS01195">
    <property type="entry name" value="PEPT_TRNA_HYDROL_1"/>
    <property type="match status" value="1"/>
</dbReference>
<dbReference type="PROSITE" id="PS01196">
    <property type="entry name" value="PEPT_TRNA_HYDROL_2"/>
    <property type="match status" value="1"/>
</dbReference>